<gene>
    <name evidence="1" type="primary">ureE</name>
</gene>
<accession>O87398</accession>
<evidence type="ECO:0000255" key="1">
    <source>
        <dbReference type="HAMAP-Rule" id="MF_00822"/>
    </source>
</evidence>
<evidence type="ECO:0000256" key="2">
    <source>
        <dbReference type="SAM" id="MobiDB-lite"/>
    </source>
</evidence>
<dbReference type="EMBL" id="AF056189">
    <property type="protein sequence ID" value="AAC61498.1"/>
    <property type="molecule type" value="Genomic_DNA"/>
</dbReference>
<dbReference type="RefSeq" id="WP_038004605.1">
    <property type="nucleotide sequence ID" value="NZ_CH724168.1"/>
</dbReference>
<dbReference type="SMR" id="O87398"/>
<dbReference type="STRING" id="59931.WH7805_09829"/>
<dbReference type="eggNOG" id="COG2371">
    <property type="taxonomic scope" value="Bacteria"/>
</dbReference>
<dbReference type="OrthoDB" id="5421304at2"/>
<dbReference type="GO" id="GO:0005737">
    <property type="term" value="C:cytoplasm"/>
    <property type="evidence" value="ECO:0007669"/>
    <property type="project" value="UniProtKB-SubCell"/>
</dbReference>
<dbReference type="GO" id="GO:0016151">
    <property type="term" value="F:nickel cation binding"/>
    <property type="evidence" value="ECO:0007669"/>
    <property type="project" value="UniProtKB-UniRule"/>
</dbReference>
<dbReference type="GO" id="GO:0051082">
    <property type="term" value="F:unfolded protein binding"/>
    <property type="evidence" value="ECO:0007669"/>
    <property type="project" value="UniProtKB-UniRule"/>
</dbReference>
<dbReference type="GO" id="GO:0006457">
    <property type="term" value="P:protein folding"/>
    <property type="evidence" value="ECO:0007669"/>
    <property type="project" value="InterPro"/>
</dbReference>
<dbReference type="GO" id="GO:0065003">
    <property type="term" value="P:protein-containing complex assembly"/>
    <property type="evidence" value="ECO:0007669"/>
    <property type="project" value="InterPro"/>
</dbReference>
<dbReference type="GO" id="GO:0019627">
    <property type="term" value="P:urea metabolic process"/>
    <property type="evidence" value="ECO:0007669"/>
    <property type="project" value="InterPro"/>
</dbReference>
<dbReference type="CDD" id="cd00571">
    <property type="entry name" value="UreE"/>
    <property type="match status" value="1"/>
</dbReference>
<dbReference type="Gene3D" id="2.60.260.20">
    <property type="entry name" value="Urease metallochaperone UreE, N-terminal domain"/>
    <property type="match status" value="1"/>
</dbReference>
<dbReference type="Gene3D" id="3.30.70.790">
    <property type="entry name" value="UreE, C-terminal domain"/>
    <property type="match status" value="1"/>
</dbReference>
<dbReference type="HAMAP" id="MF_00822">
    <property type="entry name" value="UreE"/>
    <property type="match status" value="1"/>
</dbReference>
<dbReference type="InterPro" id="IPR012406">
    <property type="entry name" value="UreE"/>
</dbReference>
<dbReference type="InterPro" id="IPR007864">
    <property type="entry name" value="UreE_C_dom"/>
</dbReference>
<dbReference type="InterPro" id="IPR004029">
    <property type="entry name" value="UreE_N"/>
</dbReference>
<dbReference type="InterPro" id="IPR036118">
    <property type="entry name" value="UreE_N_sf"/>
</dbReference>
<dbReference type="NCBIfam" id="NF009756">
    <property type="entry name" value="PRK13261.2-2"/>
    <property type="match status" value="1"/>
</dbReference>
<dbReference type="Pfam" id="PF05194">
    <property type="entry name" value="UreE_C"/>
    <property type="match status" value="1"/>
</dbReference>
<dbReference type="PIRSF" id="PIRSF036402">
    <property type="entry name" value="Ureas_acces_UreE"/>
    <property type="match status" value="1"/>
</dbReference>
<dbReference type="SMART" id="SM00988">
    <property type="entry name" value="UreE_N"/>
    <property type="match status" value="1"/>
</dbReference>
<dbReference type="SUPFAM" id="SSF69737">
    <property type="entry name" value="Urease metallochaperone UreE, C-terminal domain"/>
    <property type="match status" value="1"/>
</dbReference>
<dbReference type="SUPFAM" id="SSF69287">
    <property type="entry name" value="Urease metallochaperone UreE, N-terminal domain"/>
    <property type="match status" value="1"/>
</dbReference>
<keyword id="KW-0143">Chaperone</keyword>
<keyword id="KW-0963">Cytoplasm</keyword>
<keyword id="KW-0533">Nickel</keyword>
<keyword id="KW-0996">Nickel insertion</keyword>
<feature type="chain" id="PRO_0000223450" description="Urease accessory protein UreE">
    <location>
        <begin position="1"/>
        <end position="175"/>
    </location>
</feature>
<feature type="region of interest" description="Disordered" evidence="2">
    <location>
        <begin position="151"/>
        <end position="175"/>
    </location>
</feature>
<feature type="compositionally biased region" description="Basic residues" evidence="2">
    <location>
        <begin position="160"/>
        <end position="169"/>
    </location>
</feature>
<name>UREE_SYNPV</name>
<protein>
    <recommendedName>
        <fullName evidence="1">Urease accessory protein UreE</fullName>
    </recommendedName>
</protein>
<sequence>MSDNVSDHKPIVLEHRQVGEAVGDFPPDRRLQLPLTAEERTVLRGRRCSDCGLSLLLQLPREGPLQPGDRLLDRSRSWEVVVIAAPEPLLRVQADSVLELLQAAYHLGNRHVALELHDGELLLLKDSVLEAMLRSRGLRVSACERPFLPEGGAYGGSPSHAHRHSHVHSHSHETP</sequence>
<reference key="1">
    <citation type="journal article" date="1999" name="Microbiology">
        <title>The marine cyanobacterium Synechococcus sp. WH7805 requires urease (urea amidohydrolase, EC 3.5.1.5) to utilize urea as a nitrogen source: molecular-genetic and biochemical analysis of the enzyme.</title>
        <authorList>
            <person name="Collier J.L."/>
            <person name="Brahamsha B."/>
            <person name="Palenik B."/>
        </authorList>
    </citation>
    <scope>NUCLEOTIDE SEQUENCE [GENOMIC DNA]</scope>
</reference>
<comment type="function">
    <text evidence="1">Involved in urease metallocenter assembly. Binds nickel. Probably functions as a nickel donor during metallocenter assembly.</text>
</comment>
<comment type="subcellular location">
    <subcellularLocation>
        <location evidence="1">Cytoplasm</location>
    </subcellularLocation>
</comment>
<comment type="similarity">
    <text evidence="1">Belongs to the UreE family.</text>
</comment>
<proteinExistence type="inferred from homology"/>
<organism>
    <name type="scientific">Synechococcus sp. (strain WH7805)</name>
    <dbReference type="NCBI Taxonomy" id="59931"/>
    <lineage>
        <taxon>Bacteria</taxon>
        <taxon>Bacillati</taxon>
        <taxon>Cyanobacteriota</taxon>
        <taxon>Cyanophyceae</taxon>
        <taxon>Synechococcales</taxon>
        <taxon>Synechococcaceae</taxon>
        <taxon>Synechococcus</taxon>
    </lineage>
</organism>